<sequence length="262" mass="28444">MIDATAQIHPTAVVEEGAVIGANVKIGPFCYVDSKVEIGEGTELLSHVVVKGPTKIGKENRIFQFASIGEQCQDLKYAGEDTQLVIGDRNTIRESVTMHRGTVQDKGITIVGSDNLFMINAHVAHDCVIGDRCIFANNATLAGHVKVGNQAIVGGMSAIHQFCHIGDHCMLGGGSIVVQDVPPYVMAQGNHCAPFGINVEGLKRRGFEKKEILAIRRAYKTLYRSGLTLEAAKEEIAKETEAFPAVKLFLEFLEKSQRGIIR</sequence>
<protein>
    <recommendedName>
        <fullName evidence="1">Acyl-[acyl-carrier-protein]--UDP-N-acetylglucosamine O-acyltransferase</fullName>
        <shortName evidence="1">UDP-N-acetylglucosamine acyltransferase</shortName>
        <ecNumber evidence="1">2.3.1.129</ecNumber>
    </recommendedName>
</protein>
<comment type="function">
    <text evidence="1">Involved in the biosynthesis of lipid A, a phosphorylated glycolipid that anchors the lipopolysaccharide to the outer membrane of the cell.</text>
</comment>
<comment type="catalytic activity">
    <reaction evidence="1">
        <text>a (3R)-hydroxyacyl-[ACP] + UDP-N-acetyl-alpha-D-glucosamine = a UDP-3-O-[(3R)-3-hydroxyacyl]-N-acetyl-alpha-D-glucosamine + holo-[ACP]</text>
        <dbReference type="Rhea" id="RHEA:67812"/>
        <dbReference type="Rhea" id="RHEA-COMP:9685"/>
        <dbReference type="Rhea" id="RHEA-COMP:9945"/>
        <dbReference type="ChEBI" id="CHEBI:57705"/>
        <dbReference type="ChEBI" id="CHEBI:64479"/>
        <dbReference type="ChEBI" id="CHEBI:78827"/>
        <dbReference type="ChEBI" id="CHEBI:173225"/>
        <dbReference type="EC" id="2.3.1.129"/>
    </reaction>
</comment>
<comment type="pathway">
    <text evidence="1">Glycolipid biosynthesis; lipid IV(A) biosynthesis; lipid IV(A) from (3R)-3-hydroxytetradecanoyl-[acyl-carrier-protein] and UDP-N-acetyl-alpha-D-glucosamine: step 1/6.</text>
</comment>
<comment type="subunit">
    <text evidence="1">Homotrimer.</text>
</comment>
<comment type="subcellular location">
    <subcellularLocation>
        <location evidence="1">Cytoplasm</location>
    </subcellularLocation>
</comment>
<comment type="similarity">
    <text evidence="1">Belongs to the transferase hexapeptide repeat family. LpxA subfamily.</text>
</comment>
<organism>
    <name type="scientific">Vibrio vulnificus (strain CMCP6)</name>
    <dbReference type="NCBI Taxonomy" id="216895"/>
    <lineage>
        <taxon>Bacteria</taxon>
        <taxon>Pseudomonadati</taxon>
        <taxon>Pseudomonadota</taxon>
        <taxon>Gammaproteobacteria</taxon>
        <taxon>Vibrionales</taxon>
        <taxon>Vibrionaceae</taxon>
        <taxon>Vibrio</taxon>
    </lineage>
</organism>
<reference key="1">
    <citation type="submission" date="2002-12" db="EMBL/GenBank/DDBJ databases">
        <title>Complete genome sequence of Vibrio vulnificus CMCP6.</title>
        <authorList>
            <person name="Rhee J.H."/>
            <person name="Kim S.Y."/>
            <person name="Chung S.S."/>
            <person name="Kim J.J."/>
            <person name="Moon Y.H."/>
            <person name="Jeong H."/>
            <person name="Choy H.E."/>
        </authorList>
    </citation>
    <scope>NUCLEOTIDE SEQUENCE [LARGE SCALE GENOMIC DNA]</scope>
    <source>
        <strain>CMCP6</strain>
    </source>
</reference>
<evidence type="ECO:0000255" key="1">
    <source>
        <dbReference type="HAMAP-Rule" id="MF_00387"/>
    </source>
</evidence>
<accession>Q8DBE9</accession>
<name>LPXA_VIBVU</name>
<proteinExistence type="inferred from homology"/>
<keyword id="KW-0012">Acyltransferase</keyword>
<keyword id="KW-0963">Cytoplasm</keyword>
<keyword id="KW-0441">Lipid A biosynthesis</keyword>
<keyword id="KW-0444">Lipid biosynthesis</keyword>
<keyword id="KW-0443">Lipid metabolism</keyword>
<keyword id="KW-0677">Repeat</keyword>
<keyword id="KW-0808">Transferase</keyword>
<feature type="chain" id="PRO_0000188073" description="Acyl-[acyl-carrier-protein]--UDP-N-acetylglucosamine O-acyltransferase">
    <location>
        <begin position="1"/>
        <end position="262"/>
    </location>
</feature>
<dbReference type="EC" id="2.3.1.129" evidence="1"/>
<dbReference type="EMBL" id="AE016795">
    <property type="protein sequence ID" value="AAO10274.1"/>
    <property type="molecule type" value="Genomic_DNA"/>
</dbReference>
<dbReference type="RefSeq" id="WP_011079774.1">
    <property type="nucleotide sequence ID" value="NC_004459.3"/>
</dbReference>
<dbReference type="SMR" id="Q8DBE9"/>
<dbReference type="KEGG" id="vvu:VV1_1872"/>
<dbReference type="HOGENOM" id="CLU_061249_0_0_6"/>
<dbReference type="UniPathway" id="UPA00359">
    <property type="reaction ID" value="UER00477"/>
</dbReference>
<dbReference type="Proteomes" id="UP000002275">
    <property type="component" value="Chromosome 1"/>
</dbReference>
<dbReference type="GO" id="GO:0005737">
    <property type="term" value="C:cytoplasm"/>
    <property type="evidence" value="ECO:0007669"/>
    <property type="project" value="UniProtKB-SubCell"/>
</dbReference>
<dbReference type="GO" id="GO:0016020">
    <property type="term" value="C:membrane"/>
    <property type="evidence" value="ECO:0007669"/>
    <property type="project" value="GOC"/>
</dbReference>
<dbReference type="GO" id="GO:0008780">
    <property type="term" value="F:acyl-[acyl-carrier-protein]-UDP-N-acetylglucosamine O-acyltransferase activity"/>
    <property type="evidence" value="ECO:0007669"/>
    <property type="project" value="UniProtKB-UniRule"/>
</dbReference>
<dbReference type="GO" id="GO:0009245">
    <property type="term" value="P:lipid A biosynthetic process"/>
    <property type="evidence" value="ECO:0007669"/>
    <property type="project" value="UniProtKB-UniRule"/>
</dbReference>
<dbReference type="CDD" id="cd03351">
    <property type="entry name" value="LbH_UDP-GlcNAc_AT"/>
    <property type="match status" value="1"/>
</dbReference>
<dbReference type="FunFam" id="2.160.10.10:FF:000003">
    <property type="entry name" value="Acyl-[acyl-carrier-protein]--UDP-N-acetylglucosamine O-acyltransferase"/>
    <property type="match status" value="1"/>
</dbReference>
<dbReference type="Gene3D" id="2.160.10.10">
    <property type="entry name" value="Hexapeptide repeat proteins"/>
    <property type="match status" value="1"/>
</dbReference>
<dbReference type="Gene3D" id="1.20.1180.10">
    <property type="entry name" value="Udp N-acetylglucosamine O-acyltransferase, C-terminal domain"/>
    <property type="match status" value="1"/>
</dbReference>
<dbReference type="HAMAP" id="MF_00387">
    <property type="entry name" value="LpxA"/>
    <property type="match status" value="1"/>
</dbReference>
<dbReference type="InterPro" id="IPR029098">
    <property type="entry name" value="Acetyltransf_C"/>
</dbReference>
<dbReference type="InterPro" id="IPR037157">
    <property type="entry name" value="Acetyltransf_C_sf"/>
</dbReference>
<dbReference type="InterPro" id="IPR001451">
    <property type="entry name" value="Hexapep"/>
</dbReference>
<dbReference type="InterPro" id="IPR018357">
    <property type="entry name" value="Hexapep_transf_CS"/>
</dbReference>
<dbReference type="InterPro" id="IPR010137">
    <property type="entry name" value="Lipid_A_LpxA"/>
</dbReference>
<dbReference type="InterPro" id="IPR011004">
    <property type="entry name" value="Trimer_LpxA-like_sf"/>
</dbReference>
<dbReference type="NCBIfam" id="TIGR01852">
    <property type="entry name" value="lipid_A_lpxA"/>
    <property type="match status" value="1"/>
</dbReference>
<dbReference type="NCBIfam" id="NF003657">
    <property type="entry name" value="PRK05289.1"/>
    <property type="match status" value="1"/>
</dbReference>
<dbReference type="PANTHER" id="PTHR43480">
    <property type="entry name" value="ACYL-[ACYL-CARRIER-PROTEIN]--UDP-N-ACETYLGLUCOSAMINE O-ACYLTRANSFERASE"/>
    <property type="match status" value="1"/>
</dbReference>
<dbReference type="PANTHER" id="PTHR43480:SF1">
    <property type="entry name" value="ACYL-[ACYL-CARRIER-PROTEIN]--UDP-N-ACETYLGLUCOSAMINE O-ACYLTRANSFERASE, MITOCHONDRIAL-RELATED"/>
    <property type="match status" value="1"/>
</dbReference>
<dbReference type="Pfam" id="PF13720">
    <property type="entry name" value="Acetyltransf_11"/>
    <property type="match status" value="1"/>
</dbReference>
<dbReference type="Pfam" id="PF00132">
    <property type="entry name" value="Hexapep"/>
    <property type="match status" value="1"/>
</dbReference>
<dbReference type="PIRSF" id="PIRSF000456">
    <property type="entry name" value="UDP-GlcNAc_acltr"/>
    <property type="match status" value="1"/>
</dbReference>
<dbReference type="SUPFAM" id="SSF51161">
    <property type="entry name" value="Trimeric LpxA-like enzymes"/>
    <property type="match status" value="1"/>
</dbReference>
<dbReference type="PROSITE" id="PS00101">
    <property type="entry name" value="HEXAPEP_TRANSFERASES"/>
    <property type="match status" value="1"/>
</dbReference>
<gene>
    <name evidence="1" type="primary">lpxA</name>
    <name type="ordered locus">VV1_1872</name>
</gene>